<keyword id="KW-0025">Alternative splicing</keyword>
<keyword id="KW-0053">Apoptosis</keyword>
<keyword id="KW-0067">ATP-binding</keyword>
<keyword id="KW-0965">Cell junction</keyword>
<keyword id="KW-1003">Cell membrane</keyword>
<keyword id="KW-0221">Differentiation</keyword>
<keyword id="KW-1015">Disulfide bond</keyword>
<keyword id="KW-0325">Glycoprotein</keyword>
<keyword id="KW-0341">Growth regulation</keyword>
<keyword id="KW-1017">Isopeptide bond</keyword>
<keyword id="KW-0418">Kinase</keyword>
<keyword id="KW-0460">Magnesium</keyword>
<keyword id="KW-0464">Manganese</keyword>
<keyword id="KW-0472">Membrane</keyword>
<keyword id="KW-0479">Metal-binding</keyword>
<keyword id="KW-0547">Nucleotide-binding</keyword>
<keyword id="KW-0597">Phosphoprotein</keyword>
<keyword id="KW-0675">Receptor</keyword>
<keyword id="KW-1185">Reference proteome</keyword>
<keyword id="KW-0723">Serine/threonine-protein kinase</keyword>
<keyword id="KW-0732">Signal</keyword>
<keyword id="KW-0796">Tight junction</keyword>
<keyword id="KW-0808">Transferase</keyword>
<keyword id="KW-0812">Transmembrane</keyword>
<keyword id="KW-1133">Transmembrane helix</keyword>
<keyword id="KW-0832">Ubl conjugation</keyword>
<sequence>MEVAAGAPRSRLLLFVLAATATLAPEATAFQCFCHLCTKDNFTCVTDGLCFVSVTETTDKVIHNSMCIAEIDLIPRDRPFVCAPSSKTGSVTTTYCCNQDHCNKIELPTVGPFPGKPPSGLGPVELAAVIAGPVCFVCISLMLMVYICHNRTVIHHRVPNEEDPSLDRPFISEGTTLKDLIYDMTTSGSGSGLPLLVQRTIARTIVLQESIGKGRFGEVWRGKWRGEEVAVKIFSSREERSWFREAEIYQTVMLRHENILGFIAADNKDNGTWTQLWLVSDYHEHGSLFDYLNRYTVTVEGMIKLALSTASGLAHLHMEIVGTQGKPAIAHRDLKSKNILVKKNGTCCIADLGLAVRHDSATDTIDIAPNHRVGTKRYMAPEVLDDSINMKHFESFKRADIYAMGLVFWEIARRCSIGGIHEDYQLPYYDLVPSDPSVEEMRKVVCEQKLRPNIPNRWQSCEALRVMAKIMRECWYANGAARLTALRIKKTLSQLSQQEGIKM</sequence>
<dbReference type="EC" id="2.7.11.30"/>
<dbReference type="EMBL" id="AB182259">
    <property type="protein sequence ID" value="BAD91022.1"/>
    <property type="molecule type" value="mRNA"/>
</dbReference>
<dbReference type="EMBL" id="AB182260">
    <property type="protein sequence ID" value="BAD91023.1"/>
    <property type="molecule type" value="mRNA"/>
</dbReference>
<dbReference type="RefSeq" id="NP_001033728.1">
    <property type="nucleotide sequence ID" value="NM_001038639.1"/>
</dbReference>
<dbReference type="BMRB" id="Q5CD18"/>
<dbReference type="SMR" id="Q5CD18"/>
<dbReference type="FunCoup" id="Q5CD18">
    <property type="interactions" value="1604"/>
</dbReference>
<dbReference type="STRING" id="9823.ENSSSCP00000030910"/>
<dbReference type="GlyCosmos" id="Q5CD18">
    <property type="glycosylation" value="1 site, No reported glycans"/>
</dbReference>
<dbReference type="GlyGen" id="Q5CD18">
    <property type="glycosylation" value="1 site"/>
</dbReference>
<dbReference type="PaxDb" id="9823-ENSSSCP00000029422"/>
<dbReference type="GeneID" id="396665"/>
<dbReference type="KEGG" id="ssc:396665"/>
<dbReference type="CTD" id="7046"/>
<dbReference type="eggNOG" id="KOG2052">
    <property type="taxonomic scope" value="Eukaryota"/>
</dbReference>
<dbReference type="InParanoid" id="Q5CD18"/>
<dbReference type="OrthoDB" id="69842at2759"/>
<dbReference type="Proteomes" id="UP000008227">
    <property type="component" value="Unplaced"/>
</dbReference>
<dbReference type="Proteomes" id="UP000314985">
    <property type="component" value="Unplaced"/>
</dbReference>
<dbReference type="Proteomes" id="UP000694570">
    <property type="component" value="Unplaced"/>
</dbReference>
<dbReference type="Proteomes" id="UP000694571">
    <property type="component" value="Unplaced"/>
</dbReference>
<dbReference type="Proteomes" id="UP000694720">
    <property type="component" value="Unplaced"/>
</dbReference>
<dbReference type="Proteomes" id="UP000694722">
    <property type="component" value="Unplaced"/>
</dbReference>
<dbReference type="Proteomes" id="UP000694723">
    <property type="component" value="Unplaced"/>
</dbReference>
<dbReference type="Proteomes" id="UP000694724">
    <property type="component" value="Unplaced"/>
</dbReference>
<dbReference type="Proteomes" id="UP000694725">
    <property type="component" value="Unplaced"/>
</dbReference>
<dbReference type="Proteomes" id="UP000694726">
    <property type="component" value="Unplaced"/>
</dbReference>
<dbReference type="Proteomes" id="UP000694727">
    <property type="component" value="Unplaced"/>
</dbReference>
<dbReference type="Proteomes" id="UP000694728">
    <property type="component" value="Unplaced"/>
</dbReference>
<dbReference type="GO" id="GO:0048179">
    <property type="term" value="C:activin receptor complex"/>
    <property type="evidence" value="ECO:0000318"/>
    <property type="project" value="GO_Central"/>
</dbReference>
<dbReference type="GO" id="GO:0005923">
    <property type="term" value="C:bicellular tight junction"/>
    <property type="evidence" value="ECO:0007669"/>
    <property type="project" value="UniProtKB-SubCell"/>
</dbReference>
<dbReference type="GO" id="GO:0009986">
    <property type="term" value="C:cell surface"/>
    <property type="evidence" value="ECO:0000250"/>
    <property type="project" value="UniProtKB"/>
</dbReference>
<dbReference type="GO" id="GO:0005768">
    <property type="term" value="C:endosome"/>
    <property type="evidence" value="ECO:0000250"/>
    <property type="project" value="UniProtKB"/>
</dbReference>
<dbReference type="GO" id="GO:0016020">
    <property type="term" value="C:membrane"/>
    <property type="evidence" value="ECO:0000250"/>
    <property type="project" value="AgBase"/>
</dbReference>
<dbReference type="GO" id="GO:0045121">
    <property type="term" value="C:membrane raft"/>
    <property type="evidence" value="ECO:0000250"/>
    <property type="project" value="UniProtKB"/>
</dbReference>
<dbReference type="GO" id="GO:0005634">
    <property type="term" value="C:nucleus"/>
    <property type="evidence" value="ECO:0000250"/>
    <property type="project" value="UniProtKB"/>
</dbReference>
<dbReference type="GO" id="GO:0005886">
    <property type="term" value="C:plasma membrane"/>
    <property type="evidence" value="ECO:0000250"/>
    <property type="project" value="UniProtKB"/>
</dbReference>
<dbReference type="GO" id="GO:0048185">
    <property type="term" value="F:activin binding"/>
    <property type="evidence" value="ECO:0000318"/>
    <property type="project" value="GO_Central"/>
</dbReference>
<dbReference type="GO" id="GO:0016361">
    <property type="term" value="F:activin receptor activity, type I"/>
    <property type="evidence" value="ECO:0000318"/>
    <property type="project" value="GO_Central"/>
</dbReference>
<dbReference type="GO" id="GO:0005524">
    <property type="term" value="F:ATP binding"/>
    <property type="evidence" value="ECO:0007669"/>
    <property type="project" value="UniProtKB-KW"/>
</dbReference>
<dbReference type="GO" id="GO:0046872">
    <property type="term" value="F:metal ion binding"/>
    <property type="evidence" value="ECO:0007669"/>
    <property type="project" value="UniProtKB-KW"/>
</dbReference>
<dbReference type="GO" id="GO:0046332">
    <property type="term" value="F:SMAD binding"/>
    <property type="evidence" value="ECO:0000318"/>
    <property type="project" value="GO_Central"/>
</dbReference>
<dbReference type="GO" id="GO:0050431">
    <property type="term" value="F:transforming growth factor beta binding"/>
    <property type="evidence" value="ECO:0000250"/>
    <property type="project" value="AgBase"/>
</dbReference>
<dbReference type="GO" id="GO:0005025">
    <property type="term" value="F:transforming growth factor beta receptor activity, type I"/>
    <property type="evidence" value="ECO:0000250"/>
    <property type="project" value="AgBase"/>
</dbReference>
<dbReference type="GO" id="GO:0032924">
    <property type="term" value="P:activin receptor signaling pathway"/>
    <property type="evidence" value="ECO:0000250"/>
    <property type="project" value="AgBase"/>
</dbReference>
<dbReference type="GO" id="GO:0006915">
    <property type="term" value="P:apoptotic process"/>
    <property type="evidence" value="ECO:0007669"/>
    <property type="project" value="UniProtKB-KW"/>
</dbReference>
<dbReference type="GO" id="GO:0060317">
    <property type="term" value="P:cardiac epithelial to mesenchymal transition"/>
    <property type="evidence" value="ECO:0000250"/>
    <property type="project" value="AgBase"/>
</dbReference>
<dbReference type="GO" id="GO:0071363">
    <property type="term" value="P:cellular response to growth factor stimulus"/>
    <property type="evidence" value="ECO:0000318"/>
    <property type="project" value="GO_Central"/>
</dbReference>
<dbReference type="GO" id="GO:0042118">
    <property type="term" value="P:endothelial cell activation"/>
    <property type="evidence" value="ECO:0000250"/>
    <property type="project" value="AgBase"/>
</dbReference>
<dbReference type="GO" id="GO:0007507">
    <property type="term" value="P:heart development"/>
    <property type="evidence" value="ECO:0000250"/>
    <property type="project" value="AgBase"/>
</dbReference>
<dbReference type="GO" id="GO:0035556">
    <property type="term" value="P:intracellular signal transduction"/>
    <property type="evidence" value="ECO:0000250"/>
    <property type="project" value="AgBase"/>
</dbReference>
<dbReference type="GO" id="GO:0048762">
    <property type="term" value="P:mesenchymal cell differentiation"/>
    <property type="evidence" value="ECO:0000250"/>
    <property type="project" value="AgBase"/>
</dbReference>
<dbReference type="GO" id="GO:0007399">
    <property type="term" value="P:nervous system development"/>
    <property type="evidence" value="ECO:0000318"/>
    <property type="project" value="GO_Central"/>
</dbReference>
<dbReference type="GO" id="GO:0045893">
    <property type="term" value="P:positive regulation of DNA-templated transcription"/>
    <property type="evidence" value="ECO:0000250"/>
    <property type="project" value="AgBase"/>
</dbReference>
<dbReference type="GO" id="GO:0001938">
    <property type="term" value="P:positive regulation of endothelial cell proliferation"/>
    <property type="evidence" value="ECO:0000250"/>
    <property type="project" value="AgBase"/>
</dbReference>
<dbReference type="GO" id="GO:0010628">
    <property type="term" value="P:positive regulation of gene expression"/>
    <property type="evidence" value="ECO:0000250"/>
    <property type="project" value="AgBase"/>
</dbReference>
<dbReference type="GO" id="GO:0010717">
    <property type="term" value="P:regulation of epithelial to mesenchymal transition"/>
    <property type="evidence" value="ECO:0000250"/>
    <property type="project" value="AgBase"/>
</dbReference>
<dbReference type="GO" id="GO:0010468">
    <property type="term" value="P:regulation of gene expression"/>
    <property type="evidence" value="ECO:0000250"/>
    <property type="project" value="AgBase"/>
</dbReference>
<dbReference type="GO" id="GO:0007179">
    <property type="term" value="P:transforming growth factor beta receptor signaling pathway"/>
    <property type="evidence" value="ECO:0000250"/>
    <property type="project" value="AgBase"/>
</dbReference>
<dbReference type="GO" id="GO:0101023">
    <property type="term" value="P:vascular endothelial cell proliferation"/>
    <property type="evidence" value="ECO:0000318"/>
    <property type="project" value="GO_Central"/>
</dbReference>
<dbReference type="CDD" id="cd14143">
    <property type="entry name" value="STKc_TGFbR1_ACVR1b_ACVR1c"/>
    <property type="match status" value="1"/>
</dbReference>
<dbReference type="CDD" id="cd23537">
    <property type="entry name" value="TFP_LU_ECD_ALK5"/>
    <property type="match status" value="1"/>
</dbReference>
<dbReference type="FunFam" id="1.10.510.10:FF:000045">
    <property type="entry name" value="Receptor protein serine/threonine kinase"/>
    <property type="match status" value="1"/>
</dbReference>
<dbReference type="FunFam" id="2.10.60.10:FF:000005">
    <property type="entry name" value="Receptor protein serine/threonine kinase"/>
    <property type="match status" value="1"/>
</dbReference>
<dbReference type="FunFam" id="3.30.200.20:FF:000023">
    <property type="entry name" value="Receptor protein serine/threonine kinase"/>
    <property type="match status" value="1"/>
</dbReference>
<dbReference type="Gene3D" id="2.10.60.10">
    <property type="entry name" value="CD59"/>
    <property type="match status" value="1"/>
</dbReference>
<dbReference type="Gene3D" id="3.30.200.20">
    <property type="entry name" value="Phosphorylase Kinase, domain 1"/>
    <property type="match status" value="1"/>
</dbReference>
<dbReference type="Gene3D" id="1.10.510.10">
    <property type="entry name" value="Transferase(Phosphotransferase) domain 1"/>
    <property type="match status" value="1"/>
</dbReference>
<dbReference type="InterPro" id="IPR000472">
    <property type="entry name" value="Activin_recp"/>
</dbReference>
<dbReference type="InterPro" id="IPR003605">
    <property type="entry name" value="GS_dom"/>
</dbReference>
<dbReference type="InterPro" id="IPR011009">
    <property type="entry name" value="Kinase-like_dom_sf"/>
</dbReference>
<dbReference type="InterPro" id="IPR000719">
    <property type="entry name" value="Prot_kinase_dom"/>
</dbReference>
<dbReference type="InterPro" id="IPR017441">
    <property type="entry name" value="Protein_kinase_ATP_BS"/>
</dbReference>
<dbReference type="InterPro" id="IPR008271">
    <property type="entry name" value="Ser/Thr_kinase_AS"/>
</dbReference>
<dbReference type="InterPro" id="IPR045860">
    <property type="entry name" value="Snake_toxin-like_sf"/>
</dbReference>
<dbReference type="InterPro" id="IPR000333">
    <property type="entry name" value="TGFB_receptor"/>
</dbReference>
<dbReference type="PANTHER" id="PTHR23255:SF61">
    <property type="entry name" value="TGF-BETA RECEPTOR TYPE-1"/>
    <property type="match status" value="1"/>
</dbReference>
<dbReference type="PANTHER" id="PTHR23255">
    <property type="entry name" value="TRANSFORMING GROWTH FACTOR-BETA RECEPTOR TYPE I AND II"/>
    <property type="match status" value="1"/>
</dbReference>
<dbReference type="Pfam" id="PF01064">
    <property type="entry name" value="Activin_recp"/>
    <property type="match status" value="1"/>
</dbReference>
<dbReference type="Pfam" id="PF00069">
    <property type="entry name" value="Pkinase"/>
    <property type="match status" value="1"/>
</dbReference>
<dbReference type="Pfam" id="PF08515">
    <property type="entry name" value="TGF_beta_GS"/>
    <property type="match status" value="1"/>
</dbReference>
<dbReference type="SMART" id="SM00467">
    <property type="entry name" value="GS"/>
    <property type="match status" value="1"/>
</dbReference>
<dbReference type="SMART" id="SM00220">
    <property type="entry name" value="S_TKc"/>
    <property type="match status" value="1"/>
</dbReference>
<dbReference type="SUPFAM" id="SSF56112">
    <property type="entry name" value="Protein kinase-like (PK-like)"/>
    <property type="match status" value="1"/>
</dbReference>
<dbReference type="SUPFAM" id="SSF57302">
    <property type="entry name" value="Snake toxin-like"/>
    <property type="match status" value="1"/>
</dbReference>
<dbReference type="PROSITE" id="PS51256">
    <property type="entry name" value="GS"/>
    <property type="match status" value="1"/>
</dbReference>
<dbReference type="PROSITE" id="PS00107">
    <property type="entry name" value="PROTEIN_KINASE_ATP"/>
    <property type="match status" value="1"/>
</dbReference>
<dbReference type="PROSITE" id="PS50011">
    <property type="entry name" value="PROTEIN_KINASE_DOM"/>
    <property type="match status" value="1"/>
</dbReference>
<dbReference type="PROSITE" id="PS00108">
    <property type="entry name" value="PROTEIN_KINASE_ST"/>
    <property type="match status" value="1"/>
</dbReference>
<reference key="1">
    <citation type="journal article" date="2005" name="Biochem. Genet.">
        <title>Structure and polymorphism analysis of transforming growth factor beta receptor 1 (TGFBR1) in pigs.</title>
        <authorList>
            <person name="Shimanuki S."/>
            <person name="Mikawa A."/>
            <person name="Miyake Y."/>
            <person name="Hamasima N."/>
            <person name="Mikawa S."/>
            <person name="Awata T."/>
        </authorList>
    </citation>
    <scope>NUCLEOTIDE SEQUENCE [MRNA] (ISOFORMS 1 AND 2)</scope>
    <scope>VARIANTS SER-8 AND VAL-417</scope>
    <source>
        <tissue>Testis</tissue>
    </source>
</reference>
<evidence type="ECO:0000250" key="1"/>
<evidence type="ECO:0000250" key="2">
    <source>
        <dbReference type="UniProtKB" id="P36897"/>
    </source>
</evidence>
<evidence type="ECO:0000255" key="3"/>
<evidence type="ECO:0000255" key="4">
    <source>
        <dbReference type="PROSITE-ProRule" id="PRU00159"/>
    </source>
</evidence>
<evidence type="ECO:0000255" key="5">
    <source>
        <dbReference type="PROSITE-ProRule" id="PRU00585"/>
    </source>
</evidence>
<evidence type="ECO:0000255" key="6">
    <source>
        <dbReference type="PROSITE-ProRule" id="PRU10027"/>
    </source>
</evidence>
<evidence type="ECO:0000269" key="7">
    <source>
    </source>
</evidence>
<evidence type="ECO:0000303" key="8">
    <source>
    </source>
</evidence>
<evidence type="ECO:0000305" key="9"/>
<comment type="function">
    <text evidence="2">Transmembrane serine/threonine kinase forming with the TGF-beta type II serine/threonine kinase receptor, TGFBR2, the non-promiscuous receptor for the TGF-beta cytokines TGFB1, TGFB2 and TGFB3. Transduces the TGFB1, TGFB2 and TGFB3 signal from the cell surface to the cytoplasm and is thus regulating a plethora of physiological and pathological processes including cell cycle arrest in epithelial and hematopoietic cells, control of mesenchymal cell proliferation and differentiation, wound healing, extracellular matrix production, immunosuppression and carcinogenesis. The formation of the receptor complex composed of 2 TGFBR1 and 2 TGFBR2 molecules symmetrically bound to the cytokine dimer results in the phosphorylation and the activation of TGFBR1 by the constitutively active TGFBR2. Activated TGFBR1 phosphorylates SMAD2 which dissociates from the receptor and interacts with SMAD4. The SMAD2-SMAD4 complex is subsequently translocated to the nucleus where it modulates the transcription of the TGF-beta-regulated genes. This constitutes the canonical SMAD-dependent TGF-beta signaling cascade. Also involved in non-canonical, SMAD-independent TGF-beta signaling pathways. For instance, TGFBR1 induces TRAF6 autoubiquitination which in turn results in MAP3K7 ubiquitination and activation to trigger apoptosis. Also regulates epithelial to mesenchymal transition through a SMAD-independent signaling pathway through PARD6A phosphorylation and activation (By similarity).</text>
</comment>
<comment type="catalytic activity">
    <reaction>
        <text>L-threonyl-[receptor-protein] + ATP = O-phospho-L-threonyl-[receptor-protein] + ADP + H(+)</text>
        <dbReference type="Rhea" id="RHEA:44880"/>
        <dbReference type="Rhea" id="RHEA-COMP:11024"/>
        <dbReference type="Rhea" id="RHEA-COMP:11025"/>
        <dbReference type="ChEBI" id="CHEBI:15378"/>
        <dbReference type="ChEBI" id="CHEBI:30013"/>
        <dbReference type="ChEBI" id="CHEBI:30616"/>
        <dbReference type="ChEBI" id="CHEBI:61977"/>
        <dbReference type="ChEBI" id="CHEBI:456216"/>
        <dbReference type="EC" id="2.7.11.30"/>
    </reaction>
</comment>
<comment type="catalytic activity">
    <reaction>
        <text>L-seryl-[receptor-protein] + ATP = O-phospho-L-seryl-[receptor-protein] + ADP + H(+)</text>
        <dbReference type="Rhea" id="RHEA:18673"/>
        <dbReference type="Rhea" id="RHEA-COMP:11022"/>
        <dbReference type="Rhea" id="RHEA-COMP:11023"/>
        <dbReference type="ChEBI" id="CHEBI:15378"/>
        <dbReference type="ChEBI" id="CHEBI:29999"/>
        <dbReference type="ChEBI" id="CHEBI:30616"/>
        <dbReference type="ChEBI" id="CHEBI:83421"/>
        <dbReference type="ChEBI" id="CHEBI:456216"/>
        <dbReference type="EC" id="2.7.11.30"/>
    </reaction>
</comment>
<comment type="cofactor">
    <cofactor evidence="1">
        <name>Mg(2+)</name>
        <dbReference type="ChEBI" id="CHEBI:18420"/>
    </cofactor>
    <cofactor evidence="1">
        <name>Mn(2+)</name>
        <dbReference type="ChEBI" id="CHEBI:29035"/>
    </cofactor>
</comment>
<comment type="activity regulation">
    <text evidence="2">Kept in an inactive conformation by FKBP1A preventing receptor activation in absence of ligand. CD109 is another inhibitor of the receptor (By similarity).</text>
</comment>
<comment type="subunit">
    <text evidence="2">Homodimer; in the endoplasmic reticulum but also at the cell membrane. Heterohexamer; TGFB1, TGFB2 and TGFB3 homodimeric ligands assemble a functional receptor composed of two TGFBR1 and TGFBR2 heterodimers to form a ligand-receptor heterohexamer. The respective affinity of TGBRB1 and TGFBR2 for the ligands may modulate the kinetics of assembly of the receptor and may explain the different biological activities of TGFB1, TGFB2 and TGFB3. Component of a complex composed of TSC22D1 (via N-terminus), TGFBR1 and TGFBR2; the interaction between TSC22D1 and TGFBR1 is inhibited by SMAD7 and promoted by TGFB1 (By similarity). Interacts with CD109; inhibits TGF-beta receptor activation in keratinocytes. Interacts with RBPMS. Interacts (unphosphorylated) with FKBP1A; prevents TGFBR1 phosphorylation by TGFBR2 and stabilizes it in the inactive conformation. Interacts with SMAD2, SMAD3 and ZFYVE9; ZFYVE9 recruits SMAD2 and SMAD3 to the TGF-beta receptor. Interacts with TRAF6 and MAP3K7; induces MAP3K7 activation by TRAF6. Interacts with PARD6A; involved in TGF-beta induced epithelial to mesenchymal transition. Interacts with NEDD4L (By similarity). Interacts with SMAD7, SMURF1 and SMURF2; SMAD7 recruits NEDD4L, SMURF1 and SMURF2 to the TGF-beta receptor (By similarity). Interacts with USP15 and VPS39. Interacts with SDCBP (via C-terminus) (By similarity). Interacts with CAV1 and this interaction is impaired in the presence of SDCBP (By similarity). Interacts with APPL1; interaction is TGF beta dependent; mediates trafficking of the TGFBR1 from the endosomes to the nucleus via microtubules in a TRAF6-dependent manner (By similarity). Interacts with GPR50; this interaction promotes the constitutive activation of SMAD signaling pathway (By similarity).</text>
</comment>
<comment type="subcellular location">
    <subcellularLocation>
        <location evidence="2">Cell membrane</location>
        <topology evidence="2">Single-pass type I membrane protein</topology>
    </subcellularLocation>
    <subcellularLocation>
        <location evidence="2">Cell junction</location>
        <location evidence="2">Tight junction</location>
    </subcellularLocation>
    <subcellularLocation>
        <location evidence="2">Membrane raft</location>
    </subcellularLocation>
    <subcellularLocation>
        <location evidence="2">Cell surface</location>
    </subcellularLocation>
</comment>
<comment type="alternative products">
    <event type="alternative splicing"/>
    <isoform>
        <id>Q5CD18-1</id>
        <name>1</name>
        <sequence type="displayed"/>
    </isoform>
    <isoform>
        <id>Q5CD18-2</id>
        <name>2</name>
        <sequence type="described" ref="VSP_021594"/>
    </isoform>
</comment>
<comment type="PTM">
    <text evidence="2">Phosphorylated at basal levels in the absence of ligand. Activated upon phosphorylation by TGFBR2, mainly in the GS domain. Phosphorylation in the GS domain abrogates FKBP1A-binding (By similarity).</text>
</comment>
<comment type="PTM">
    <text evidence="2">N-Glycosylated.</text>
</comment>
<comment type="PTM">
    <text evidence="2">Ubiquitinated; undergoes ubiquitination catalyzed by several E3 ubiquitin ligases including SMURF1, SMURF2 and NEDD4L2. Results in the proteasomal and/or lysosomal degradation of the receptor thereby negatively regulating its activity. Deubiquitinated by USP15, leading to stabilization of the protein and enhanced TGF-beta signal. Its ubiquitination and proteasome-mediated degradation is negatively regulated by SDCBP (By similarity).</text>
</comment>
<comment type="miscellaneous">
    <molecule>Isoform 2</molecule>
    <text evidence="9">May be due to a competing donor splice site.</text>
</comment>
<comment type="similarity">
    <text evidence="9">Belongs to the protein kinase superfamily. TKL Ser/Thr protein kinase family. TGFB receptor subfamily.</text>
</comment>
<proteinExistence type="evidence at transcript level"/>
<name>TGFR1_PIG</name>
<organism>
    <name type="scientific">Sus scrofa</name>
    <name type="common">Pig</name>
    <dbReference type="NCBI Taxonomy" id="9823"/>
    <lineage>
        <taxon>Eukaryota</taxon>
        <taxon>Metazoa</taxon>
        <taxon>Chordata</taxon>
        <taxon>Craniata</taxon>
        <taxon>Vertebrata</taxon>
        <taxon>Euteleostomi</taxon>
        <taxon>Mammalia</taxon>
        <taxon>Eutheria</taxon>
        <taxon>Laurasiatheria</taxon>
        <taxon>Artiodactyla</taxon>
        <taxon>Suina</taxon>
        <taxon>Suidae</taxon>
        <taxon>Sus</taxon>
    </lineage>
</organism>
<feature type="signal peptide" evidence="1">
    <location>
        <begin position="1"/>
        <end position="29"/>
    </location>
</feature>
<feature type="chain" id="PRO_0000260305" description="TGF-beta receptor type-1">
    <location>
        <begin position="30"/>
        <end position="503"/>
    </location>
</feature>
<feature type="topological domain" description="Extracellular" evidence="3">
    <location>
        <begin position="30"/>
        <end position="126"/>
    </location>
</feature>
<feature type="transmembrane region" description="Helical" evidence="3">
    <location>
        <begin position="127"/>
        <end position="147"/>
    </location>
</feature>
<feature type="topological domain" description="Cytoplasmic" evidence="3">
    <location>
        <begin position="148"/>
        <end position="503"/>
    </location>
</feature>
<feature type="domain" description="GS" evidence="5">
    <location>
        <begin position="175"/>
        <end position="204"/>
    </location>
</feature>
<feature type="domain" description="Protein kinase" evidence="4">
    <location>
        <begin position="205"/>
        <end position="495"/>
    </location>
</feature>
<feature type="short sequence motif" description="FKBP1A-binding">
    <location>
        <begin position="193"/>
        <end position="194"/>
    </location>
</feature>
<feature type="active site" description="Proton acceptor" evidence="4 6">
    <location>
        <position position="333"/>
    </location>
</feature>
<feature type="binding site" evidence="4">
    <location>
        <begin position="211"/>
        <end position="219"/>
    </location>
    <ligand>
        <name>ATP</name>
        <dbReference type="ChEBI" id="CHEBI:30616"/>
    </ligand>
</feature>
<feature type="binding site" evidence="4">
    <location>
        <position position="232"/>
    </location>
    <ligand>
        <name>ATP</name>
        <dbReference type="ChEBI" id="CHEBI:30616"/>
    </ligand>
</feature>
<feature type="modified residue" description="Phosphoserine" evidence="2">
    <location>
        <position position="165"/>
    </location>
</feature>
<feature type="modified residue" description="Phosphothreonine; by TGFBR2" evidence="2">
    <location>
        <position position="185"/>
    </location>
</feature>
<feature type="modified residue" description="Phosphothreonine; by TGFBR2" evidence="2">
    <location>
        <position position="186"/>
    </location>
</feature>
<feature type="modified residue" description="Phosphoserine; by TGFBR2" evidence="2">
    <location>
        <position position="187"/>
    </location>
</feature>
<feature type="modified residue" description="Phosphoserine; by TGFBR2" evidence="2">
    <location>
        <position position="189"/>
    </location>
</feature>
<feature type="modified residue" description="Phosphoserine; by TGFBR2" evidence="2">
    <location>
        <position position="191"/>
    </location>
</feature>
<feature type="glycosylation site" description="N-linked (GlcNAc...) asparagine" evidence="3">
    <location>
        <position position="41"/>
    </location>
</feature>
<feature type="disulfide bond" evidence="2">
    <location>
        <begin position="32"/>
        <end position="50"/>
    </location>
</feature>
<feature type="disulfide bond" evidence="2">
    <location>
        <begin position="34"/>
        <end position="37"/>
    </location>
</feature>
<feature type="disulfide bond" evidence="2">
    <location>
        <begin position="44"/>
        <end position="67"/>
    </location>
</feature>
<feature type="disulfide bond" evidence="2">
    <location>
        <begin position="82"/>
        <end position="96"/>
    </location>
</feature>
<feature type="disulfide bond" evidence="2">
    <location>
        <begin position="97"/>
        <end position="102"/>
    </location>
</feature>
<feature type="cross-link" description="Glycyl lysine isopeptide (Lys-Gly) (interchain with G-Cter in SUMO)" evidence="1">
    <location>
        <position position="391"/>
    </location>
</feature>
<feature type="splice variant" id="VSP_021594" description="In isoform 2." evidence="8">
    <location>
        <begin position="111"/>
        <end position="114"/>
    </location>
</feature>
<feature type="sequence variant" evidence="7">
    <original>P</original>
    <variation>S</variation>
    <location>
        <position position="8"/>
    </location>
</feature>
<feature type="sequence variant" evidence="7">
    <original>I</original>
    <variation>V</variation>
    <location>
        <position position="417"/>
    </location>
</feature>
<gene>
    <name type="primary">TGFBR1</name>
</gene>
<accession>Q5CD18</accession>
<accession>Q5CD19</accession>
<protein>
    <recommendedName>
        <fullName>TGF-beta receptor type-1</fullName>
        <shortName>TGFR-1</shortName>
        <ecNumber>2.7.11.30</ecNumber>
    </recommendedName>
    <alternativeName>
        <fullName>TGF-beta type I receptor</fullName>
    </alternativeName>
    <alternativeName>
        <fullName>Transforming growth factor-beta receptor type I</fullName>
        <shortName>TGF-beta receptor type I</shortName>
        <shortName>TbetaR-I</shortName>
    </alternativeName>
</protein>